<organism>
    <name type="scientific">Measles virus (strain Edmonston-AIK-C vaccine)</name>
    <name type="common">MeV</name>
    <name type="synonym">Subacute sclerose panencephalitis virus</name>
    <dbReference type="NCBI Taxonomy" id="36408"/>
    <lineage>
        <taxon>Viruses</taxon>
        <taxon>Riboviria</taxon>
        <taxon>Orthornavirae</taxon>
        <taxon>Negarnaviricota</taxon>
        <taxon>Haploviricotina</taxon>
        <taxon>Monjiviricetes</taxon>
        <taxon>Mononegavirales</taxon>
        <taxon>Paramyxoviridae</taxon>
        <taxon>Orthoparamyxovirinae</taxon>
        <taxon>Morbillivirus</taxon>
        <taxon>Morbillivirus hominis</taxon>
        <taxon>Measles morbillivirus</taxon>
    </lineage>
</organism>
<organismHost>
    <name type="scientific">Homo sapiens</name>
    <name type="common">Human</name>
    <dbReference type="NCBI Taxonomy" id="9606"/>
</organismHost>
<sequence length="2183" mass="247757">MDSLSVNQILYPEVHLDSPIVTNKIVAILEYARVPHAYSLEDPTLCQNIKHRLKNGFSNQMIINNVEVGNVIKSKLRSYPAHSHIPYPNCNQDLFNIEDKESTRKIRELLKKGNSLYSKVSDKVFQCLRDTNSRLGLGSELREDIKEKVINLGVYMHSSQWFEPFLFWFTVKTEMRSVIKSQTHTCHRRRHTPVFFTGSSVELLISRDLVAIISKESQHVYYLTFELVLMYCDVIEGRLMTETAMTIDARYTELLGRVRYMWKLIDGFFPALGNPTYQIVAMLEPLSLAYLQLRDITVELRGAFLNHCFTEIHDVLDQNGFSDEGTYHELIEALDYIFITDDIHLTGEIFSFFRSFGHPRLEAVTAAENVRKYMNQPKVIVYETLMKGHAIFCGIIINGYRDRHGGSWPPLTLPLHAADTIRNAQASGEGLTHEQCVDNWKSFAGVKFGCFMPLSLDSDLTMYLKDKALAALQREWDSVYPKEFLRYDPPKGTGSRRLVDVFLNDSSFDPYDVIMYVVSGAYLHDPEFNLSYSLKEKEIKETGRLFAKMTYKMRACQVIAENLISNGIGKYFKDNGMAKDEHDLTKALHTLAVSGVPKDLKESHRGGPVLKTYSRSPVHTSTRNVRAAKGFIGFPQVIRQDQDTDHPENMEAYETVSAFITTDLKKYCLNWRYETISLFAQRLNEIYGLPSFFQWLHKRLETSVLYVSDPHCPPDLDAHIPLYKVPNDQIFIKYPMGGIEGYCQKLWTISTIPYLYLAAYESGVRIASLVQGDNQTIAVTKRVPSTWPYNLKKREAARVTRDYFVILRQRLHDIGHHLKANETIVSSHFFVYSKGIYYDGLLVSQSLKSIARCVFWSETIVDETRAACSNIATTMAKSIERGYDRYLAYSLNVLKVIQQILISLGFTINSTMTRDVVIPLLTNNDLLIRMALLPAPIGGMNYLNMSRLFVRNIGDPVTSSIADLKRMILASLMPEETLHQVMTQQPGDSSFLDWASDPYSANLVCVQSITRLLKNITARFVLIHSPNPMLKGLFHDDSKEEDEGLAAFLMDRHIIVPRAAHEILDHSVTGARESIAGMLDTTKGLIRASMRKGGLTSRVITRLSNYDYEQFRAGMVLLTGRKRNVLIDKESCSVQLARALRSHMWARLARGRPIYGLEVPDVLESMRGHLIRRHETCVICECGSVNYGWFFVPSGCQLDDIDKETSSLRVPYIGSTTDERTDMKLAFVRAPSRSLRSAVRIATVYSWAYGDDDSSWNEAWLLARQRANVSLEELRVITPISTSTNLAHRLRDRSTQVKYSGTSLVRVARYTTISNDNLSFVISDKKVDTNFIYQQGMLLGLGVLETLFRLEKDTGSSNTVLHLHVETDCCVIPMIDHPRIPSSRKLELRAELCTNPLIYDNAPLIDRDTTRLYTQSHRRHLVEFVTWSTPQLYHILAKSTALSMIDLVTKFEKDHMNEISALIGDDDINSFITEFLVIEPRLFTIYLGQCAAINWAFDVHYHRPSGKYQMGELLSSFLSRMSKGVFKVLVNALSHPKIYKKFWHCGIIEPIHGPSLDAQNLHTTVCNMVYTCYMTYLDLLLNEELEEFTFLLCESDEDVVPDRFDNIQAKHLCVLADLYCQPGACPPIRGLRPVEKCAVLTDHIKAEARLSPAGSSWNINPIIVDHYSCSLTYLRRGSIKQIRLRVDPGFIFDALAEVNVSQPKIGSNNISNMSIKAFRPPHDDVAKLLKDINTSKHNLPISGGNLANYEIHAFRRIGLNSSACYKAVEISTLIRRCLEPGEDGLFLGEGSGSMLITYKEILKLNKCFYNSGVSANSRSGQRELAPYPSEVGLVEHRMGVGNIVKVLFNGRPEVTWVGSVDCFNFIVSNIPTSSVGFIHSDIETLPNKDTIEKLEELAAILSMALLLGKIGSILVIKLMPFSGDFVQGFISYVGSYYREVNLVYPRYSNFISTESYLVMTDLKANRLMNPEKIKQQIIESSVRTSPGLIGHILSIKQLSCIQAIVGDVVSRGDINPTLKKLTPIEQVLINCGLAINGPKLCKELIHHDVASGQDGLLNSILILYRELARFKDNRRSQQGMFHAYPVLVSSRQRELISRITRKFWGHILLYSGNRKLINKFIQNLKSGYLILDLHQNIFVKNLSKSEKQIIMTGGLKREWVFKVTVKETKEWYKLVGYSALIKD</sequence>
<reference key="1">
    <citation type="journal article" date="1993" name="Virus Genes">
        <title>Molecular cloning and complete nucleotide sequence of genomic RNA of the AIK-C strain of attenuated measles virus.</title>
        <authorList>
            <person name="Mori T."/>
            <person name="Sasaki K."/>
            <person name="Hashimoto H."/>
            <person name="Makino S."/>
        </authorList>
    </citation>
    <scope>NUCLEOTIDE SEQUENCE [GENOMIC RNA]</scope>
</reference>
<name>L_MEASA</name>
<protein>
    <recommendedName>
        <fullName>RNA-directed RNA polymerase L</fullName>
        <shortName>Protein L</shortName>
    </recommendedName>
    <alternativeName>
        <fullName>Large structural protein</fullName>
    </alternativeName>
    <alternativeName>
        <fullName>Replicase</fullName>
    </alternativeName>
    <alternativeName>
        <fullName>Transcriptase</fullName>
    </alternativeName>
    <domain>
        <recommendedName>
            <fullName>RNA-directed RNA polymerase</fullName>
            <ecNumber evidence="3">2.7.7.48</ecNumber>
        </recommendedName>
    </domain>
    <domain>
        <recommendedName>
            <fullName evidence="2">GTP phosphohydrolase</fullName>
            <ecNumber evidence="2">3.6.1.-</ecNumber>
        </recommendedName>
    </domain>
    <domain>
        <recommendedName>
            <fullName evidence="8">GDP polyribonucleotidyltransferase</fullName>
            <ecNumber evidence="2">2.7.7.88</ecNumber>
        </recommendedName>
        <alternativeName>
            <fullName evidence="8">PRNTase</fullName>
        </alternativeName>
    </domain>
    <domain>
        <recommendedName>
            <fullName evidence="8">mRNA cap methyltransferase</fullName>
            <ecNumber evidence="2">2.1.1.375</ecNumber>
        </recommendedName>
        <alternativeName>
            <fullName evidence="2">mRNA (guanine-N(7)-)-methyltransferase</fullName>
            <shortName evidence="2">G-N7-MTase</shortName>
        </alternativeName>
        <alternativeName>
            <fullName evidence="2">mRNA (nucleoside-2'-O-)-methyltransferase</fullName>
            <shortName evidence="2">N1-2'-O-MTase</shortName>
        </alternativeName>
    </domain>
</protein>
<gene>
    <name type="primary">L</name>
</gene>
<comment type="function">
    <text evidence="2">RNA-directed RNA polymerase that catalyzes the transcription of viral mRNAs, their capping and polyadenylation. The template is composed of the viral RNA tightly encapsidated by the nucleoprotein (N). The viral polymerase binds to the genomic RNA at the 3' leader promoter, and transcribes subsequently all viral mRNAs with a decreasing efficiency. The first gene is the most transcribed, and the last the least transcribed. The viral phosphoprotein acts as a processivity factor. Capping is concomitant with initiation of mRNA transcription. Indeed, a GDP polyribonucleotidyl transferase (PRNTase) adds the cap structure when the nascent RNA chain length has reached few nucleotides. Ribose 2'-O methylation of viral mRNA cap precedes and facilitates subsequent guanine-N-7 methylation, both activities being carried by the viral polymerase. Polyadenylation of mRNAs occur by a stuttering mechanism at a slipery stop site present at the end viral genes. After finishing transcription of a mRNA, the polymerase can resume transcription of the downstream gene.</text>
</comment>
<comment type="function">
    <text evidence="2">RNA-directed RNA polymerase that catalyzes the replication of viral genomic RNA. The template is composed of the viral RNA tightly encapsidated by the nucleoprotein (N). The replicase mode is dependent on intracellular N protein concentration. In this mode, the polymerase replicates the whole viral genome without recognizing transcriptional signals, and the replicated genome is not caped or polyadenylated.</text>
</comment>
<comment type="catalytic activity">
    <reaction evidence="6">
        <text>RNA(n) + a ribonucleoside 5'-triphosphate = RNA(n+1) + diphosphate</text>
        <dbReference type="Rhea" id="RHEA:21248"/>
        <dbReference type="Rhea" id="RHEA-COMP:14527"/>
        <dbReference type="Rhea" id="RHEA-COMP:17342"/>
        <dbReference type="ChEBI" id="CHEBI:33019"/>
        <dbReference type="ChEBI" id="CHEBI:61557"/>
        <dbReference type="ChEBI" id="CHEBI:140395"/>
        <dbReference type="EC" id="2.7.7.48"/>
    </reaction>
</comment>
<comment type="catalytic activity">
    <reaction evidence="2">
        <text>a 5'-end (5'-triphosphoguanosine)-adenylyl-adenylyl-cytidylyl-adenosine in mRNA + 2 S-adenosyl-L-methionine = a 5'-end (N(7)-methyl 5'-triphosphoguanosine)-(2'-O-methyladenylyl)-adenylyl-cytidylyl-adenosine in mRNA + 2 S-adenosyl-L-homocysteine + H(+)</text>
        <dbReference type="Rhea" id="RHEA:65376"/>
        <dbReference type="Rhea" id="RHEA-COMP:16797"/>
        <dbReference type="Rhea" id="RHEA-COMP:16798"/>
        <dbReference type="ChEBI" id="CHEBI:15378"/>
        <dbReference type="ChEBI" id="CHEBI:57856"/>
        <dbReference type="ChEBI" id="CHEBI:59789"/>
        <dbReference type="ChEBI" id="CHEBI:156483"/>
        <dbReference type="ChEBI" id="CHEBI:156484"/>
        <dbReference type="EC" id="2.1.1.375"/>
    </reaction>
</comment>
<comment type="catalytic activity">
    <reaction evidence="2">
        <text>a 5'-end (5'-triphosphoguanosine)-adenylyl-adenylyl-cytidylyl-adenosine in mRNA + S-adenosyl-L-methionine = a 5'-end (5'-triphosphoguanosine)-(2'-O-methyladenylyl)-adenylyl-cytidylyl-adenosine in mRNA + S-adenosyl-L-homocysteine + H(+)</text>
        <dbReference type="Rhea" id="RHEA:65380"/>
        <dbReference type="Rhea" id="RHEA-COMP:16797"/>
        <dbReference type="Rhea" id="RHEA-COMP:16801"/>
        <dbReference type="ChEBI" id="CHEBI:15378"/>
        <dbReference type="ChEBI" id="CHEBI:57856"/>
        <dbReference type="ChEBI" id="CHEBI:59789"/>
        <dbReference type="ChEBI" id="CHEBI:156482"/>
        <dbReference type="ChEBI" id="CHEBI:156484"/>
    </reaction>
</comment>
<comment type="catalytic activity">
    <reaction evidence="3">
        <text>a 5'-end triphospho-adenylyl-adenylyl-cytidylyl-adenosine in mRNA + GDP + H(+) = a 5'-end (5'-triphosphoguanosine)-adenylyl-adenylyl-cytidylyl-adenosine in mRNA + diphosphate</text>
        <dbReference type="Rhea" id="RHEA:65436"/>
        <dbReference type="Rhea" id="RHEA-COMP:16797"/>
        <dbReference type="Rhea" id="RHEA-COMP:16799"/>
        <dbReference type="ChEBI" id="CHEBI:15378"/>
        <dbReference type="ChEBI" id="CHEBI:33019"/>
        <dbReference type="ChEBI" id="CHEBI:58189"/>
        <dbReference type="ChEBI" id="CHEBI:156484"/>
        <dbReference type="ChEBI" id="CHEBI:156503"/>
        <dbReference type="EC" id="2.7.7.88"/>
    </reaction>
</comment>
<comment type="catalytic activity">
    <reaction evidence="2">
        <text>a 5'-end (5'-triphosphoguanosine)-(2'-O-methyladenylyl)-adenylyl-cytidylyl-adenosine in mRNA + S-adenosyl-L-methionine = a 5'-end (N(7)-methyl 5'-triphosphoguanosine)-(2'-O-methyladenylyl)-adenylyl-cytidylyl-adenosine in mRNA + S-adenosyl-L-homocysteine</text>
        <dbReference type="Rhea" id="RHEA:65440"/>
        <dbReference type="Rhea" id="RHEA-COMP:16798"/>
        <dbReference type="Rhea" id="RHEA-COMP:16801"/>
        <dbReference type="ChEBI" id="CHEBI:57856"/>
        <dbReference type="ChEBI" id="CHEBI:59789"/>
        <dbReference type="ChEBI" id="CHEBI:156482"/>
        <dbReference type="ChEBI" id="CHEBI:156483"/>
    </reaction>
</comment>
<comment type="catalytic activity">
    <reaction evidence="3">
        <text>GTP + H2O = GDP + phosphate + H(+)</text>
        <dbReference type="Rhea" id="RHEA:19669"/>
        <dbReference type="ChEBI" id="CHEBI:15377"/>
        <dbReference type="ChEBI" id="CHEBI:15378"/>
        <dbReference type="ChEBI" id="CHEBI:37565"/>
        <dbReference type="ChEBI" id="CHEBI:43474"/>
        <dbReference type="ChEBI" id="CHEBI:58189"/>
    </reaction>
</comment>
<comment type="subunit">
    <text evidence="4">Interacts with the phophoprotein (via multimerization domain and XD domain); this interaction forms the polymerase L-P complex.</text>
</comment>
<comment type="subcellular location">
    <subcellularLocation>
        <location evidence="8">Virion</location>
    </subcellularLocation>
    <subcellularLocation>
        <location evidence="1">Host cytoplasm</location>
    </subcellularLocation>
</comment>
<comment type="similarity">
    <text evidence="8">Belongs to the paramyxovirus L protein family.</text>
</comment>
<dbReference type="EC" id="2.7.7.48" evidence="3"/>
<dbReference type="EC" id="3.6.1.-" evidence="2"/>
<dbReference type="EC" id="2.7.7.88" evidence="2"/>
<dbReference type="EC" id="2.1.1.375" evidence="2"/>
<dbReference type="EMBL" id="S58435">
    <property type="protein sequence ID" value="AAB26147.1"/>
    <property type="molecule type" value="Genomic_RNA"/>
</dbReference>
<dbReference type="PIR" id="G48556">
    <property type="entry name" value="G48556"/>
</dbReference>
<dbReference type="SMR" id="P35975"/>
<dbReference type="Proteomes" id="UP000007775">
    <property type="component" value="Genome"/>
</dbReference>
<dbReference type="GO" id="GO:0030430">
    <property type="term" value="C:host cell cytoplasm"/>
    <property type="evidence" value="ECO:0007669"/>
    <property type="project" value="UniProtKB-SubCell"/>
</dbReference>
<dbReference type="GO" id="GO:0044423">
    <property type="term" value="C:virion component"/>
    <property type="evidence" value="ECO:0007669"/>
    <property type="project" value="UniProtKB-KW"/>
</dbReference>
<dbReference type="GO" id="GO:0005524">
    <property type="term" value="F:ATP binding"/>
    <property type="evidence" value="ECO:0007669"/>
    <property type="project" value="UniProtKB-KW"/>
</dbReference>
<dbReference type="GO" id="GO:0003924">
    <property type="term" value="F:GTPase activity"/>
    <property type="evidence" value="ECO:0007669"/>
    <property type="project" value="RHEA"/>
</dbReference>
<dbReference type="GO" id="GO:0004482">
    <property type="term" value="F:mRNA 5'-cap (guanine-N7-)-methyltransferase activity"/>
    <property type="evidence" value="ECO:0007669"/>
    <property type="project" value="InterPro"/>
</dbReference>
<dbReference type="GO" id="GO:0003968">
    <property type="term" value="F:RNA-directed RNA polymerase activity"/>
    <property type="evidence" value="ECO:0007669"/>
    <property type="project" value="UniProtKB-KW"/>
</dbReference>
<dbReference type="Gene3D" id="3.40.50.150">
    <property type="entry name" value="Vaccinia Virus protein VP39"/>
    <property type="match status" value="1"/>
</dbReference>
<dbReference type="InterPro" id="IPR039736">
    <property type="entry name" value="L_poly_C"/>
</dbReference>
<dbReference type="InterPro" id="IPR026890">
    <property type="entry name" value="Mononeg_mRNAcap"/>
</dbReference>
<dbReference type="InterPro" id="IPR014023">
    <property type="entry name" value="Mononeg_RNA_pol_cat"/>
</dbReference>
<dbReference type="InterPro" id="IPR025786">
    <property type="entry name" value="Mononega_L_MeTrfase"/>
</dbReference>
<dbReference type="InterPro" id="IPR016269">
    <property type="entry name" value="RNA-dir_pol_paramyxovirus"/>
</dbReference>
<dbReference type="InterPro" id="IPR029063">
    <property type="entry name" value="SAM-dependent_MTases_sf"/>
</dbReference>
<dbReference type="NCBIfam" id="TIGR04198">
    <property type="entry name" value="paramyx_RNAcap"/>
    <property type="match status" value="1"/>
</dbReference>
<dbReference type="Pfam" id="PF14318">
    <property type="entry name" value="Mononeg_mRNAcap"/>
    <property type="match status" value="1"/>
</dbReference>
<dbReference type="Pfam" id="PF00946">
    <property type="entry name" value="Mononeg_RNA_pol"/>
    <property type="match status" value="1"/>
</dbReference>
<dbReference type="PIRSF" id="PIRSF000830">
    <property type="entry name" value="RNA_pol_ParamyxoV"/>
    <property type="match status" value="1"/>
</dbReference>
<dbReference type="PROSITE" id="PS50526">
    <property type="entry name" value="RDRP_SSRNA_NEG_NONSEG"/>
    <property type="match status" value="1"/>
</dbReference>
<dbReference type="PROSITE" id="PS51590">
    <property type="entry name" value="SAM_MT_MNV_L"/>
    <property type="match status" value="1"/>
</dbReference>
<keyword id="KW-0067">ATP-binding</keyword>
<keyword id="KW-1035">Host cytoplasm</keyword>
<keyword id="KW-0378">Hydrolase</keyword>
<keyword id="KW-0489">Methyltransferase</keyword>
<keyword id="KW-0506">mRNA capping</keyword>
<keyword id="KW-0507">mRNA processing</keyword>
<keyword id="KW-0511">Multifunctional enzyme</keyword>
<keyword id="KW-0547">Nucleotide-binding</keyword>
<keyword id="KW-0548">Nucleotidyltransferase</keyword>
<keyword id="KW-0696">RNA-directed RNA polymerase</keyword>
<keyword id="KW-0949">S-adenosyl-L-methionine</keyword>
<keyword id="KW-0808">Transferase</keyword>
<keyword id="KW-0693">Viral RNA replication</keyword>
<keyword id="KW-0946">Virion</keyword>
<feature type="chain" id="PRO_0000142728" description="RNA-directed RNA polymerase L">
    <location>
        <begin position="1"/>
        <end position="2183"/>
    </location>
</feature>
<feature type="domain" description="RdRp catalytic" evidence="6">
    <location>
        <begin position="656"/>
        <end position="840"/>
    </location>
</feature>
<feature type="domain" description="Mononegavirus-type SAM-dependent 2'-O-MTase" evidence="7">
    <location>
        <begin position="1755"/>
        <end position="1958"/>
    </location>
</feature>
<feature type="binding site" evidence="5">
    <location>
        <begin position="1785"/>
        <end position="1794"/>
    </location>
    <ligand>
        <name>ATP</name>
        <dbReference type="ChEBI" id="CHEBI:30616"/>
    </ligand>
</feature>
<accession>P35975</accession>
<proteinExistence type="inferred from homology"/>
<evidence type="ECO:0000250" key="1"/>
<evidence type="ECO:0000250" key="2">
    <source>
        <dbReference type="UniProtKB" id="P03523"/>
    </source>
</evidence>
<evidence type="ECO:0000250" key="3">
    <source>
        <dbReference type="UniProtKB" id="P28887"/>
    </source>
</evidence>
<evidence type="ECO:0000250" key="4">
    <source>
        <dbReference type="UniProtKB" id="Q9WMB3"/>
    </source>
</evidence>
<evidence type="ECO:0000255" key="5"/>
<evidence type="ECO:0000255" key="6">
    <source>
        <dbReference type="PROSITE-ProRule" id="PRU00539"/>
    </source>
</evidence>
<evidence type="ECO:0000255" key="7">
    <source>
        <dbReference type="PROSITE-ProRule" id="PRU00923"/>
    </source>
</evidence>
<evidence type="ECO:0000305" key="8"/>